<reference key="1">
    <citation type="submission" date="2008-02" db="EMBL/GenBank/DDBJ databases">
        <title>Complete sequence of Synechococcus sp. PCC 7002.</title>
        <authorList>
            <person name="Li T."/>
            <person name="Zhao J."/>
            <person name="Zhao C."/>
            <person name="Liu Z."/>
            <person name="Zhao F."/>
            <person name="Marquardt J."/>
            <person name="Nomura C.T."/>
            <person name="Persson S."/>
            <person name="Detter J.C."/>
            <person name="Richardson P.M."/>
            <person name="Lanz C."/>
            <person name="Schuster S.C."/>
            <person name="Wang J."/>
            <person name="Li S."/>
            <person name="Huang X."/>
            <person name="Cai T."/>
            <person name="Yu Z."/>
            <person name="Luo J."/>
            <person name="Zhao J."/>
            <person name="Bryant D.A."/>
        </authorList>
    </citation>
    <scope>NUCLEOTIDE SEQUENCE [LARGE SCALE GENOMIC DNA]</scope>
    <source>
        <strain>ATCC 27264 / PCC 7002 / PR-6</strain>
    </source>
</reference>
<comment type="function">
    <text evidence="1">Provides the (R)-glutamate required for cell wall biosynthesis.</text>
</comment>
<comment type="catalytic activity">
    <reaction evidence="1">
        <text>L-glutamate = D-glutamate</text>
        <dbReference type="Rhea" id="RHEA:12813"/>
        <dbReference type="ChEBI" id="CHEBI:29985"/>
        <dbReference type="ChEBI" id="CHEBI:29986"/>
        <dbReference type="EC" id="5.1.1.3"/>
    </reaction>
</comment>
<comment type="pathway">
    <text evidence="1">Cell wall biogenesis; peptidoglycan biosynthesis.</text>
</comment>
<comment type="similarity">
    <text evidence="1">Belongs to the aspartate/glutamate racemases family.</text>
</comment>
<proteinExistence type="inferred from homology"/>
<organism>
    <name type="scientific">Picosynechococcus sp. (strain ATCC 27264 / PCC 7002 / PR-6)</name>
    <name type="common">Agmenellum quadruplicatum</name>
    <dbReference type="NCBI Taxonomy" id="32049"/>
    <lineage>
        <taxon>Bacteria</taxon>
        <taxon>Bacillati</taxon>
        <taxon>Cyanobacteriota</taxon>
        <taxon>Cyanophyceae</taxon>
        <taxon>Oscillatoriophycideae</taxon>
        <taxon>Chroococcales</taxon>
        <taxon>Geminocystaceae</taxon>
        <taxon>Picosynechococcus</taxon>
    </lineage>
</organism>
<gene>
    <name evidence="1" type="primary">murI</name>
    <name type="ordered locus">SYNPCC7002_A0579</name>
</gene>
<evidence type="ECO:0000255" key="1">
    <source>
        <dbReference type="HAMAP-Rule" id="MF_00258"/>
    </source>
</evidence>
<name>MURI_PICP2</name>
<accession>B1XPV8</accession>
<sequence>MGNQQQHPIGIFDSGLGGITVLRALYRQLPQESIIYFADTARLPYGDRSPEELIQYVREILTWMEAQGVKMVVMACNTSSAIALDVIRSEFKTPVLGLILPGARGAVSQGKRIGVIATQATVNSGAYENAILEANPEAAVWQMPCPEFVPLIEANRINDPHTKRIVQKRLQPLLEQGIDTLVYGCTHYRHLSGVIQSILPSHVICVDPAEYVVSATEQELELMGWKNPQSPLPTRFAVSGCPDQFAQSAKGWLGHQPLVEQVDLKNLIMNASPLSITNG</sequence>
<protein>
    <recommendedName>
        <fullName evidence="1">Glutamate racemase</fullName>
        <ecNumber evidence="1">5.1.1.3</ecNumber>
    </recommendedName>
</protein>
<feature type="chain" id="PRO_1000114070" description="Glutamate racemase">
    <location>
        <begin position="1"/>
        <end position="279"/>
    </location>
</feature>
<feature type="active site" description="Proton donor/acceptor" evidence="1">
    <location>
        <position position="76"/>
    </location>
</feature>
<feature type="active site" description="Proton donor/acceptor" evidence="1">
    <location>
        <position position="185"/>
    </location>
</feature>
<feature type="binding site" evidence="1">
    <location>
        <begin position="13"/>
        <end position="14"/>
    </location>
    <ligand>
        <name>substrate</name>
    </ligand>
</feature>
<feature type="binding site" evidence="1">
    <location>
        <begin position="45"/>
        <end position="46"/>
    </location>
    <ligand>
        <name>substrate</name>
    </ligand>
</feature>
<feature type="binding site" evidence="1">
    <location>
        <begin position="77"/>
        <end position="78"/>
    </location>
    <ligand>
        <name>substrate</name>
    </ligand>
</feature>
<feature type="binding site" evidence="1">
    <location>
        <begin position="186"/>
        <end position="187"/>
    </location>
    <ligand>
        <name>substrate</name>
    </ligand>
</feature>
<dbReference type="EC" id="5.1.1.3" evidence="1"/>
<dbReference type="EMBL" id="CP000951">
    <property type="protein sequence ID" value="ACA98586.1"/>
    <property type="molecule type" value="Genomic_DNA"/>
</dbReference>
<dbReference type="RefSeq" id="WP_012306210.1">
    <property type="nucleotide sequence ID" value="NZ_JAHHPU010000001.1"/>
</dbReference>
<dbReference type="SMR" id="B1XPV8"/>
<dbReference type="STRING" id="32049.SYNPCC7002_A0579"/>
<dbReference type="KEGG" id="syp:SYNPCC7002_A0579"/>
<dbReference type="eggNOG" id="COG0796">
    <property type="taxonomic scope" value="Bacteria"/>
</dbReference>
<dbReference type="HOGENOM" id="CLU_052344_0_2_3"/>
<dbReference type="UniPathway" id="UPA00219"/>
<dbReference type="Proteomes" id="UP000001688">
    <property type="component" value="Chromosome"/>
</dbReference>
<dbReference type="GO" id="GO:0008881">
    <property type="term" value="F:glutamate racemase activity"/>
    <property type="evidence" value="ECO:0007669"/>
    <property type="project" value="UniProtKB-UniRule"/>
</dbReference>
<dbReference type="GO" id="GO:0071555">
    <property type="term" value="P:cell wall organization"/>
    <property type="evidence" value="ECO:0007669"/>
    <property type="project" value="UniProtKB-KW"/>
</dbReference>
<dbReference type="GO" id="GO:0009252">
    <property type="term" value="P:peptidoglycan biosynthetic process"/>
    <property type="evidence" value="ECO:0007669"/>
    <property type="project" value="UniProtKB-UniRule"/>
</dbReference>
<dbReference type="GO" id="GO:0008360">
    <property type="term" value="P:regulation of cell shape"/>
    <property type="evidence" value="ECO:0007669"/>
    <property type="project" value="UniProtKB-KW"/>
</dbReference>
<dbReference type="FunFam" id="3.40.50.1860:FF:000001">
    <property type="entry name" value="Glutamate racemase"/>
    <property type="match status" value="1"/>
</dbReference>
<dbReference type="Gene3D" id="3.40.50.1860">
    <property type="match status" value="2"/>
</dbReference>
<dbReference type="HAMAP" id="MF_00258">
    <property type="entry name" value="Glu_racemase"/>
    <property type="match status" value="1"/>
</dbReference>
<dbReference type="InterPro" id="IPR015942">
    <property type="entry name" value="Asp/Glu/hydantoin_racemase"/>
</dbReference>
<dbReference type="InterPro" id="IPR001920">
    <property type="entry name" value="Asp/Glu_race"/>
</dbReference>
<dbReference type="InterPro" id="IPR018187">
    <property type="entry name" value="Asp/Glu_racemase_AS_1"/>
</dbReference>
<dbReference type="InterPro" id="IPR033134">
    <property type="entry name" value="Asp/Glu_racemase_AS_2"/>
</dbReference>
<dbReference type="InterPro" id="IPR004391">
    <property type="entry name" value="Glu_race"/>
</dbReference>
<dbReference type="NCBIfam" id="TIGR00067">
    <property type="entry name" value="glut_race"/>
    <property type="match status" value="1"/>
</dbReference>
<dbReference type="PANTHER" id="PTHR21198">
    <property type="entry name" value="GLUTAMATE RACEMASE"/>
    <property type="match status" value="1"/>
</dbReference>
<dbReference type="PANTHER" id="PTHR21198:SF2">
    <property type="entry name" value="GLUTAMATE RACEMASE"/>
    <property type="match status" value="1"/>
</dbReference>
<dbReference type="Pfam" id="PF01177">
    <property type="entry name" value="Asp_Glu_race"/>
    <property type="match status" value="1"/>
</dbReference>
<dbReference type="SUPFAM" id="SSF53681">
    <property type="entry name" value="Aspartate/glutamate racemase"/>
    <property type="match status" value="2"/>
</dbReference>
<dbReference type="PROSITE" id="PS00923">
    <property type="entry name" value="ASP_GLU_RACEMASE_1"/>
    <property type="match status" value="1"/>
</dbReference>
<dbReference type="PROSITE" id="PS00924">
    <property type="entry name" value="ASP_GLU_RACEMASE_2"/>
    <property type="match status" value="1"/>
</dbReference>
<keyword id="KW-0133">Cell shape</keyword>
<keyword id="KW-0961">Cell wall biogenesis/degradation</keyword>
<keyword id="KW-0413">Isomerase</keyword>
<keyword id="KW-0573">Peptidoglycan synthesis</keyword>
<keyword id="KW-1185">Reference proteome</keyword>